<organismHost>
    <name type="scientific">Homo sapiens</name>
    <name type="common">Human</name>
    <dbReference type="NCBI Taxonomy" id="9606"/>
</organismHost>
<feature type="chain" id="PRO_0000369450" description="Non-structural protein 3">
    <location>
        <begin position="1"/>
        <end position="313"/>
    </location>
</feature>
<feature type="region of interest" description="RNA-binding" evidence="1">
    <location>
        <begin position="1"/>
        <end position="149"/>
    </location>
</feature>
<feature type="region of interest" description="Dimerization" evidence="1">
    <location>
        <begin position="150"/>
        <end position="206"/>
    </location>
</feature>
<feature type="region of interest" description="Interaction with host ZC3H7B" evidence="1">
    <location>
        <begin position="170"/>
        <end position="234"/>
    </location>
</feature>
<feature type="region of interest" description="Interaction with host EIF4G1" evidence="1">
    <location>
        <begin position="208"/>
        <end position="313"/>
    </location>
</feature>
<feature type="coiled-coil region" evidence="1">
    <location>
        <begin position="166"/>
        <end position="237"/>
    </location>
</feature>
<feature type="sequence conflict" description="In Ref. 2; BAA84968." ref="2">
    <location>
        <begin position="1"/>
        <end position="3"/>
    </location>
</feature>
<feature type="sequence conflict" description="In Ref. 2; BAA84968." ref="2">
    <original>DQALNG</original>
    <variation>GPACNE</variation>
    <location>
        <begin position="71"/>
        <end position="76"/>
    </location>
</feature>
<feature type="sequence conflict" description="In Ref. 2; BAA84968." ref="2">
    <original>N</original>
    <variation>G</variation>
    <location>
        <position position="276"/>
    </location>
</feature>
<evidence type="ECO:0000255" key="1">
    <source>
        <dbReference type="HAMAP-Rule" id="MF_04094"/>
    </source>
</evidence>
<organism>
    <name type="scientific">Rotavirus A (strain RVA/Human/Japan/KU/1995/G1P1A[8])</name>
    <name type="common">RV-A</name>
    <dbReference type="NCBI Taxonomy" id="10952"/>
    <lineage>
        <taxon>Viruses</taxon>
        <taxon>Riboviria</taxon>
        <taxon>Orthornavirae</taxon>
        <taxon>Duplornaviricota</taxon>
        <taxon>Resentoviricetes</taxon>
        <taxon>Reovirales</taxon>
        <taxon>Sedoreoviridae</taxon>
        <taxon>Rotavirus</taxon>
        <taxon>Rotavirus A</taxon>
    </lineage>
</organism>
<accession>Q82050</accession>
<accession>Q9QNA7</accession>
<comment type="function">
    <text evidence="1">Plays an important role in stimulating the translation of viral mRNAs. These mRNAs are capped but not polyadenylated, instead terminating in a conserved sequence 'GACC' at the 3' that is recognized by NSP3, which competes with host PABPC1 for EIF4G1 binding. The interaction between NSP3 and host EIF4G1 stabilizes the EIF4E-EIF4G1 interaction, thereby facilitating the initiation of capped mRNA translation.</text>
</comment>
<comment type="subunit">
    <text evidence="1">Homodimer. Interacts (via the coiled-coil region) with host ZC3H7B (via LD motif). Interacts with host EIF4G1.</text>
</comment>
<comment type="subcellular location">
    <subcellularLocation>
        <location evidence="1">Host cytoplasm</location>
    </subcellularLocation>
</comment>
<comment type="similarity">
    <text evidence="1">Belongs to the rotavirus NSP3 family.</text>
</comment>
<protein>
    <recommendedName>
        <fullName evidence="1">Non-structural protein 3</fullName>
        <shortName evidence="1">NSP3</shortName>
    </recommendedName>
    <alternativeName>
        <fullName evidence="1">NCVP4</fullName>
    </alternativeName>
    <alternativeName>
        <fullName evidence="1">Non-structural RNA-binding protein 34</fullName>
        <shortName evidence="1">NS34</shortName>
    </alternativeName>
</protein>
<dbReference type="EMBL" id="X81435">
    <property type="protein sequence ID" value="CAA57194.1"/>
    <property type="molecule type" value="mRNA"/>
</dbReference>
<dbReference type="EMBL" id="AB022771">
    <property type="protein sequence ID" value="BAA84968.1"/>
    <property type="molecule type" value="mRNA"/>
</dbReference>
<dbReference type="PIR" id="S51727">
    <property type="entry name" value="S51727"/>
</dbReference>
<dbReference type="SMR" id="Q82050"/>
<dbReference type="Proteomes" id="UP000001458">
    <property type="component" value="Genome"/>
</dbReference>
<dbReference type="GO" id="GO:0030430">
    <property type="term" value="C:host cell cytoplasm"/>
    <property type="evidence" value="ECO:0007669"/>
    <property type="project" value="UniProtKB-SubCell"/>
</dbReference>
<dbReference type="GO" id="GO:0003723">
    <property type="term" value="F:RNA binding"/>
    <property type="evidence" value="ECO:0007669"/>
    <property type="project" value="UniProtKB-UniRule"/>
</dbReference>
<dbReference type="GO" id="GO:0006417">
    <property type="term" value="P:regulation of translation"/>
    <property type="evidence" value="ECO:0007669"/>
    <property type="project" value="UniProtKB-UniRule"/>
</dbReference>
<dbReference type="CDD" id="cd20714">
    <property type="entry name" value="NSP3_rotavirus"/>
    <property type="match status" value="1"/>
</dbReference>
<dbReference type="Gene3D" id="3.30.70.1610">
    <property type="match status" value="1"/>
</dbReference>
<dbReference type="Gene3D" id="1.20.5.970">
    <property type="entry name" value="Nonstructural RNA-binding protein"/>
    <property type="match status" value="1"/>
</dbReference>
<dbReference type="Gene3D" id="6.10.280.20">
    <property type="entry name" value="Rotavirus non-structural protein NSP3, N-terminal domain"/>
    <property type="match status" value="1"/>
</dbReference>
<dbReference type="HAMAP" id="MF_04094">
    <property type="entry name" value="ROTA_A_NSP3"/>
    <property type="match status" value="1"/>
</dbReference>
<dbReference type="HAMAP" id="MF_04090">
    <property type="entry name" value="ROTA_NSP3"/>
    <property type="match status" value="1"/>
</dbReference>
<dbReference type="InterPro" id="IPR042519">
    <property type="entry name" value="NSP3_N_rotavirus"/>
</dbReference>
<dbReference type="InterPro" id="IPR036082">
    <property type="entry name" value="NSP3_sf"/>
</dbReference>
<dbReference type="InterPro" id="IPR002873">
    <property type="entry name" value="Rotavirus_NSP3"/>
</dbReference>
<dbReference type="Pfam" id="PF01665">
    <property type="entry name" value="Rota_NSP3"/>
    <property type="match status" value="1"/>
</dbReference>
<dbReference type="SUPFAM" id="SSF69903">
    <property type="entry name" value="NSP3 homodimer"/>
    <property type="match status" value="1"/>
</dbReference>
<dbReference type="SUPFAM" id="SSF58030">
    <property type="entry name" value="Rotavirus nonstructural proteins"/>
    <property type="match status" value="1"/>
</dbReference>
<proteinExistence type="evidence at transcript level"/>
<keyword id="KW-0175">Coiled coil</keyword>
<keyword id="KW-1035">Host cytoplasm</keyword>
<keyword id="KW-0945">Host-virus interaction</keyword>
<keyword id="KW-0694">RNA-binding</keyword>
<keyword id="KW-0810">Translation regulation</keyword>
<reference key="1">
    <citation type="journal article" date="1995" name="Virology">
        <title>Comparative nucleotide and amino acid sequence analysis of the sequence-specific RNA-binding rotavirus nonstructural protein NSP3.</title>
        <authorList>
            <person name="Rao C.D."/>
            <person name="Das M."/>
            <person name="Ilango P."/>
            <person name="Lalwani R."/>
            <person name="Rao B.S."/>
            <person name="Gowda K."/>
        </authorList>
    </citation>
    <scope>NUCLEOTIDE SEQUENCE [MRNA]</scope>
</reference>
<reference key="2">
    <citation type="submission" date="1999-01" db="EMBL/GenBank/DDBJ databases">
        <authorList>
            <person name="Taniguchi K."/>
        </authorList>
    </citation>
    <scope>NUCLEOTIDE SEQUENCE [MRNA]</scope>
</reference>
<sequence>MLKMESTQQMVSSIINTSFEAAVVAATSTLELMGIQYDYNEVFTRVKSKFDYVMDDSGVKNNLLGKAITIDQALNGKFGSAIRNRNWMIDSKTVAKLDEDVNKLRMTLSSKGIDQKMRVLNACFSVKRIPGKSSSIIKCTRLMKDKLERGEVEVDDSYVDEKMEIDTIDWKSRYDQLEKRFESLKQRVNEKYNAWVQKAKKVNENMYSLQNVISQQQNQIADLQQYCNKLEVDLQGKFSSLVSSVEWYLRSMELPDDVKTDVEQQLNSIDLINPINAIDDIESLIRNLIQDYDRTFLMLKGLLKQCNYEYAYE</sequence>
<name>NSP3_ROTHK</name>